<feature type="chain" id="PRO_0000374123" description="tRNA-2-methylthio-N(6)-dimethylallyladenosine synthase">
    <location>
        <begin position="1"/>
        <end position="509"/>
    </location>
</feature>
<feature type="domain" description="MTTase N-terminal" evidence="1">
    <location>
        <begin position="66"/>
        <end position="184"/>
    </location>
</feature>
<feature type="domain" description="Radical SAM core" evidence="2">
    <location>
        <begin position="207"/>
        <end position="437"/>
    </location>
</feature>
<feature type="domain" description="TRAM" evidence="1">
    <location>
        <begin position="440"/>
        <end position="503"/>
    </location>
</feature>
<feature type="region of interest" description="Disordered" evidence="3">
    <location>
        <begin position="1"/>
        <end position="20"/>
    </location>
</feature>
<feature type="binding site" evidence="1">
    <location>
        <position position="75"/>
    </location>
    <ligand>
        <name>[4Fe-4S] cluster</name>
        <dbReference type="ChEBI" id="CHEBI:49883"/>
        <label>1</label>
    </ligand>
</feature>
<feature type="binding site" evidence="1">
    <location>
        <position position="111"/>
    </location>
    <ligand>
        <name>[4Fe-4S] cluster</name>
        <dbReference type="ChEBI" id="CHEBI:49883"/>
        <label>1</label>
    </ligand>
</feature>
<feature type="binding site" evidence="1">
    <location>
        <position position="145"/>
    </location>
    <ligand>
        <name>[4Fe-4S] cluster</name>
        <dbReference type="ChEBI" id="CHEBI:49883"/>
        <label>1</label>
    </ligand>
</feature>
<feature type="binding site" evidence="1">
    <location>
        <position position="221"/>
    </location>
    <ligand>
        <name>[4Fe-4S] cluster</name>
        <dbReference type="ChEBI" id="CHEBI:49883"/>
        <label>2</label>
        <note>4Fe-4S-S-AdoMet</note>
    </ligand>
</feature>
<feature type="binding site" evidence="1">
    <location>
        <position position="225"/>
    </location>
    <ligand>
        <name>[4Fe-4S] cluster</name>
        <dbReference type="ChEBI" id="CHEBI:49883"/>
        <label>2</label>
        <note>4Fe-4S-S-AdoMet</note>
    </ligand>
</feature>
<feature type="binding site" evidence="1">
    <location>
        <position position="228"/>
    </location>
    <ligand>
        <name>[4Fe-4S] cluster</name>
        <dbReference type="ChEBI" id="CHEBI:49883"/>
        <label>2</label>
        <note>4Fe-4S-S-AdoMet</note>
    </ligand>
</feature>
<reference key="1">
    <citation type="journal article" date="2007" name="Nat. Biotechnol.">
        <title>Comparative analysis of the complete genome sequence of the plant growth-promoting bacterium Bacillus amyloliquefaciens FZB42.</title>
        <authorList>
            <person name="Chen X.H."/>
            <person name="Koumoutsi A."/>
            <person name="Scholz R."/>
            <person name="Eisenreich A."/>
            <person name="Schneider K."/>
            <person name="Heinemeyer I."/>
            <person name="Morgenstern B."/>
            <person name="Voss B."/>
            <person name="Hess W.R."/>
            <person name="Reva O."/>
            <person name="Junge H."/>
            <person name="Voigt B."/>
            <person name="Jungblut P.R."/>
            <person name="Vater J."/>
            <person name="Suessmuth R."/>
            <person name="Liesegang H."/>
            <person name="Strittmatter A."/>
            <person name="Gottschalk G."/>
            <person name="Borriss R."/>
        </authorList>
    </citation>
    <scope>NUCLEOTIDE SEQUENCE [LARGE SCALE GENOMIC DNA]</scope>
    <source>
        <strain>DSM 23117 / BGSC 10A6 / LMG 26770 / FZB42</strain>
    </source>
</reference>
<gene>
    <name evidence="1" type="primary">miaB</name>
    <name type="ordered locus">RBAM_016850</name>
</gene>
<name>MIAB_BACVZ</name>
<accession>A7Z4X2</accession>
<organism>
    <name type="scientific">Bacillus velezensis (strain DSM 23117 / BGSC 10A6 / LMG 26770 / FZB42)</name>
    <name type="common">Bacillus amyloliquefaciens subsp. plantarum</name>
    <dbReference type="NCBI Taxonomy" id="326423"/>
    <lineage>
        <taxon>Bacteria</taxon>
        <taxon>Bacillati</taxon>
        <taxon>Bacillota</taxon>
        <taxon>Bacilli</taxon>
        <taxon>Bacillales</taxon>
        <taxon>Bacillaceae</taxon>
        <taxon>Bacillus</taxon>
        <taxon>Bacillus amyloliquefaciens group</taxon>
    </lineage>
</organism>
<protein>
    <recommendedName>
        <fullName evidence="1">tRNA-2-methylthio-N(6)-dimethylallyladenosine synthase</fullName>
        <ecNumber evidence="1">2.8.4.3</ecNumber>
    </recommendedName>
    <alternativeName>
        <fullName evidence="1">(Dimethylallyl)adenosine tRNA methylthiotransferase MiaB</fullName>
    </alternativeName>
    <alternativeName>
        <fullName evidence="1">tRNA-i(6)A37 methylthiotransferase</fullName>
    </alternativeName>
</protein>
<sequence length="509" mass="58020">MNEKQKQESGQVNPADKTSEKDYSKYFEAVYIPPSLKDAKKRGKESVQYHNDFKISEEFKGLGEGRKFYIRTYGCQMNEHDTEVMAGIFMALGYEATNSVDDANVILLNTCAIRENAENKVFGELGHLKALKKNNPDLILGVCGCMSQEESVVNRILKKHPFVDMIFGTHNIHRLPELLSEAYLSKEMVIEVWSKEGDVIENLPKVRNGKIKGWVNIMYGCDKFCTYCIVPYTRGKERSRRPEEIIQEVRRLASEGYKEITLLGQNVNAYGKDFEDMTYGLGDLMDELRKIDIPRIRFTTSHPRDFDDHLIEVLAKGGNLLDHIHLPVQSGSSAMLKMMARKYDRERYLELVGKIKAAMPNASLTTDIIVGFPNETDEQFEETLSLYREVEFDSAYTFIYSPREGTPAAKMKDNVPMRVKKERLQRLNDLVKEISAKKMKEYEGRTVEVLVEGESKNNPDILAGYTEKSKLVNFKGPKDAIGKIVRVKIEQAKTWSLDGVMAGEAIEVK</sequence>
<dbReference type="EC" id="2.8.4.3" evidence="1"/>
<dbReference type="EMBL" id="CP000560">
    <property type="protein sequence ID" value="ABS74048.1"/>
    <property type="molecule type" value="Genomic_DNA"/>
</dbReference>
<dbReference type="RefSeq" id="WP_012117585.1">
    <property type="nucleotide sequence ID" value="NC_009725.2"/>
</dbReference>
<dbReference type="SMR" id="A7Z4X2"/>
<dbReference type="GeneID" id="93080818"/>
<dbReference type="KEGG" id="bay:RBAM_016850"/>
<dbReference type="HOGENOM" id="CLU_018697_2_0_9"/>
<dbReference type="Proteomes" id="UP000001120">
    <property type="component" value="Chromosome"/>
</dbReference>
<dbReference type="GO" id="GO:0005829">
    <property type="term" value="C:cytosol"/>
    <property type="evidence" value="ECO:0007669"/>
    <property type="project" value="TreeGrafter"/>
</dbReference>
<dbReference type="GO" id="GO:0051539">
    <property type="term" value="F:4 iron, 4 sulfur cluster binding"/>
    <property type="evidence" value="ECO:0007669"/>
    <property type="project" value="UniProtKB-UniRule"/>
</dbReference>
<dbReference type="GO" id="GO:0046872">
    <property type="term" value="F:metal ion binding"/>
    <property type="evidence" value="ECO:0007669"/>
    <property type="project" value="UniProtKB-KW"/>
</dbReference>
<dbReference type="GO" id="GO:0035597">
    <property type="term" value="F:N6-isopentenyladenosine methylthiotransferase activity"/>
    <property type="evidence" value="ECO:0007669"/>
    <property type="project" value="TreeGrafter"/>
</dbReference>
<dbReference type="CDD" id="cd01335">
    <property type="entry name" value="Radical_SAM"/>
    <property type="match status" value="1"/>
</dbReference>
<dbReference type="FunFam" id="3.40.50.12160:FF:000006">
    <property type="entry name" value="tRNA-2-methylthio-N(6)-dimethylallyladenosine synthase"/>
    <property type="match status" value="1"/>
</dbReference>
<dbReference type="FunFam" id="3.80.30.20:FF:000001">
    <property type="entry name" value="tRNA-2-methylthio-N(6)-dimethylallyladenosine synthase 2"/>
    <property type="match status" value="1"/>
</dbReference>
<dbReference type="Gene3D" id="3.40.50.12160">
    <property type="entry name" value="Methylthiotransferase, N-terminal domain"/>
    <property type="match status" value="1"/>
</dbReference>
<dbReference type="Gene3D" id="3.80.30.20">
    <property type="entry name" value="tm_1862 like domain"/>
    <property type="match status" value="1"/>
</dbReference>
<dbReference type="HAMAP" id="MF_01864">
    <property type="entry name" value="tRNA_metthiotr_MiaB"/>
    <property type="match status" value="1"/>
</dbReference>
<dbReference type="InterPro" id="IPR006638">
    <property type="entry name" value="Elp3/MiaA/NifB-like_rSAM"/>
</dbReference>
<dbReference type="InterPro" id="IPR005839">
    <property type="entry name" value="Methylthiotransferase"/>
</dbReference>
<dbReference type="InterPro" id="IPR020612">
    <property type="entry name" value="Methylthiotransferase_CS"/>
</dbReference>
<dbReference type="InterPro" id="IPR013848">
    <property type="entry name" value="Methylthiotransferase_N"/>
</dbReference>
<dbReference type="InterPro" id="IPR038135">
    <property type="entry name" value="Methylthiotransferase_N_sf"/>
</dbReference>
<dbReference type="InterPro" id="IPR006463">
    <property type="entry name" value="MiaB_methiolase"/>
</dbReference>
<dbReference type="InterPro" id="IPR007197">
    <property type="entry name" value="rSAM"/>
</dbReference>
<dbReference type="InterPro" id="IPR023404">
    <property type="entry name" value="rSAM_horseshoe"/>
</dbReference>
<dbReference type="InterPro" id="IPR002792">
    <property type="entry name" value="TRAM_dom"/>
</dbReference>
<dbReference type="NCBIfam" id="TIGR01574">
    <property type="entry name" value="miaB-methiolase"/>
    <property type="match status" value="1"/>
</dbReference>
<dbReference type="NCBIfam" id="TIGR00089">
    <property type="entry name" value="MiaB/RimO family radical SAM methylthiotransferase"/>
    <property type="match status" value="1"/>
</dbReference>
<dbReference type="PANTHER" id="PTHR43020">
    <property type="entry name" value="CDK5 REGULATORY SUBUNIT-ASSOCIATED PROTEIN 1"/>
    <property type="match status" value="1"/>
</dbReference>
<dbReference type="PANTHER" id="PTHR43020:SF2">
    <property type="entry name" value="MITOCHONDRIAL TRNA METHYLTHIOTRANSFERASE CDK5RAP1"/>
    <property type="match status" value="1"/>
</dbReference>
<dbReference type="Pfam" id="PF04055">
    <property type="entry name" value="Radical_SAM"/>
    <property type="match status" value="1"/>
</dbReference>
<dbReference type="Pfam" id="PF01938">
    <property type="entry name" value="TRAM"/>
    <property type="match status" value="1"/>
</dbReference>
<dbReference type="Pfam" id="PF00919">
    <property type="entry name" value="UPF0004"/>
    <property type="match status" value="1"/>
</dbReference>
<dbReference type="SFLD" id="SFLDF00273">
    <property type="entry name" value="(dimethylallyl)adenosine_tRNA"/>
    <property type="match status" value="1"/>
</dbReference>
<dbReference type="SFLD" id="SFLDG01082">
    <property type="entry name" value="B12-binding_domain_containing"/>
    <property type="match status" value="1"/>
</dbReference>
<dbReference type="SFLD" id="SFLDG01061">
    <property type="entry name" value="methylthiotransferase"/>
    <property type="match status" value="1"/>
</dbReference>
<dbReference type="SMART" id="SM00729">
    <property type="entry name" value="Elp3"/>
    <property type="match status" value="1"/>
</dbReference>
<dbReference type="SUPFAM" id="SSF102114">
    <property type="entry name" value="Radical SAM enzymes"/>
    <property type="match status" value="1"/>
</dbReference>
<dbReference type="PROSITE" id="PS51449">
    <property type="entry name" value="MTTASE_N"/>
    <property type="match status" value="1"/>
</dbReference>
<dbReference type="PROSITE" id="PS01278">
    <property type="entry name" value="MTTASE_RADICAL"/>
    <property type="match status" value="1"/>
</dbReference>
<dbReference type="PROSITE" id="PS51918">
    <property type="entry name" value="RADICAL_SAM"/>
    <property type="match status" value="1"/>
</dbReference>
<dbReference type="PROSITE" id="PS50926">
    <property type="entry name" value="TRAM"/>
    <property type="match status" value="1"/>
</dbReference>
<evidence type="ECO:0000255" key="1">
    <source>
        <dbReference type="HAMAP-Rule" id="MF_01864"/>
    </source>
</evidence>
<evidence type="ECO:0000255" key="2">
    <source>
        <dbReference type="PROSITE-ProRule" id="PRU01266"/>
    </source>
</evidence>
<evidence type="ECO:0000256" key="3">
    <source>
        <dbReference type="SAM" id="MobiDB-lite"/>
    </source>
</evidence>
<keyword id="KW-0004">4Fe-4S</keyword>
<keyword id="KW-0963">Cytoplasm</keyword>
<keyword id="KW-0408">Iron</keyword>
<keyword id="KW-0411">Iron-sulfur</keyword>
<keyword id="KW-0479">Metal-binding</keyword>
<keyword id="KW-0949">S-adenosyl-L-methionine</keyword>
<keyword id="KW-0808">Transferase</keyword>
<keyword id="KW-0819">tRNA processing</keyword>
<proteinExistence type="inferred from homology"/>
<comment type="function">
    <text evidence="1">Catalyzes the methylthiolation of N6-(dimethylallyl)adenosine (i(6)A), leading to the formation of 2-methylthio-N6-(dimethylallyl)adenosine (ms(2)i(6)A) at position 37 in tRNAs that read codons beginning with uridine.</text>
</comment>
<comment type="catalytic activity">
    <reaction evidence="1">
        <text>N(6)-dimethylallyladenosine(37) in tRNA + (sulfur carrier)-SH + AH2 + 2 S-adenosyl-L-methionine = 2-methylsulfanyl-N(6)-dimethylallyladenosine(37) in tRNA + (sulfur carrier)-H + 5'-deoxyadenosine + L-methionine + A + S-adenosyl-L-homocysteine + 2 H(+)</text>
        <dbReference type="Rhea" id="RHEA:37067"/>
        <dbReference type="Rhea" id="RHEA-COMP:10375"/>
        <dbReference type="Rhea" id="RHEA-COMP:10376"/>
        <dbReference type="Rhea" id="RHEA-COMP:14737"/>
        <dbReference type="Rhea" id="RHEA-COMP:14739"/>
        <dbReference type="ChEBI" id="CHEBI:13193"/>
        <dbReference type="ChEBI" id="CHEBI:15378"/>
        <dbReference type="ChEBI" id="CHEBI:17319"/>
        <dbReference type="ChEBI" id="CHEBI:17499"/>
        <dbReference type="ChEBI" id="CHEBI:29917"/>
        <dbReference type="ChEBI" id="CHEBI:57844"/>
        <dbReference type="ChEBI" id="CHEBI:57856"/>
        <dbReference type="ChEBI" id="CHEBI:59789"/>
        <dbReference type="ChEBI" id="CHEBI:64428"/>
        <dbReference type="ChEBI" id="CHEBI:74415"/>
        <dbReference type="ChEBI" id="CHEBI:74417"/>
        <dbReference type="EC" id="2.8.4.3"/>
    </reaction>
</comment>
<comment type="cofactor">
    <cofactor evidence="1">
        <name>[4Fe-4S] cluster</name>
        <dbReference type="ChEBI" id="CHEBI:49883"/>
    </cofactor>
    <text evidence="1">Binds 2 [4Fe-4S] clusters. One cluster is coordinated with 3 cysteines and an exchangeable S-adenosyl-L-methionine.</text>
</comment>
<comment type="subunit">
    <text evidence="1">Monomer.</text>
</comment>
<comment type="subcellular location">
    <subcellularLocation>
        <location evidence="1">Cytoplasm</location>
    </subcellularLocation>
</comment>
<comment type="similarity">
    <text evidence="1">Belongs to the methylthiotransferase family. MiaB subfamily.</text>
</comment>